<gene>
    <name type="primary">LYSMD4</name>
</gene>
<evidence type="ECO:0000255" key="1"/>
<evidence type="ECO:0000255" key="2">
    <source>
        <dbReference type="PROSITE-ProRule" id="PRU01118"/>
    </source>
</evidence>
<evidence type="ECO:0000256" key="3">
    <source>
        <dbReference type="SAM" id="MobiDB-lite"/>
    </source>
</evidence>
<evidence type="ECO:0000269" key="4">
    <source>
    </source>
</evidence>
<evidence type="ECO:0000269" key="5">
    <source>
    </source>
</evidence>
<evidence type="ECO:0000303" key="6">
    <source>
    </source>
</evidence>
<evidence type="ECO:0000305" key="7"/>
<keyword id="KW-0025">Alternative splicing</keyword>
<keyword id="KW-0325">Glycoprotein</keyword>
<keyword id="KW-0472">Membrane</keyword>
<keyword id="KW-1267">Proteomics identification</keyword>
<keyword id="KW-1185">Reference proteome</keyword>
<keyword id="KW-0812">Transmembrane</keyword>
<keyword id="KW-1133">Transmembrane helix</keyword>
<sequence length="296" mass="32066">MRHEELLTKTFQGPAVVCGTPTSHVYMFKNGSGDSGDSSEEESHRVVLRPRGKERHKSGVHQPPQAGAGDVVLLQRELAQEDSLNKLALQYGCKVADIKKVNNFIREQDLYALKSVKIPVRNHGILMETHKELKPLLSPSSETTVTVELPEADRAGAGTGAQAGQLMGFFKGIDQDIERAVQSEIFLHESYCMDTSHQPLLPAPPKTPMDGADCGIQWWNAVFIMLLIGIVLPVFYLVYFKIQASGETPNSLNTTVIPNGSMAMGTVPGQAPRLAVAVPAVTSADSQFSQTTQAGS</sequence>
<reference key="1">
    <citation type="journal article" date="2004" name="Nat. Genet.">
        <title>Complete sequencing and characterization of 21,243 full-length human cDNAs.</title>
        <authorList>
            <person name="Ota T."/>
            <person name="Suzuki Y."/>
            <person name="Nishikawa T."/>
            <person name="Otsuki T."/>
            <person name="Sugiyama T."/>
            <person name="Irie R."/>
            <person name="Wakamatsu A."/>
            <person name="Hayashi K."/>
            <person name="Sato H."/>
            <person name="Nagai K."/>
            <person name="Kimura K."/>
            <person name="Makita H."/>
            <person name="Sekine M."/>
            <person name="Obayashi M."/>
            <person name="Nishi T."/>
            <person name="Shibahara T."/>
            <person name="Tanaka T."/>
            <person name="Ishii S."/>
            <person name="Yamamoto J."/>
            <person name="Saito K."/>
            <person name="Kawai Y."/>
            <person name="Isono Y."/>
            <person name="Nakamura Y."/>
            <person name="Nagahari K."/>
            <person name="Murakami K."/>
            <person name="Yasuda T."/>
            <person name="Iwayanagi T."/>
            <person name="Wagatsuma M."/>
            <person name="Shiratori A."/>
            <person name="Sudo H."/>
            <person name="Hosoiri T."/>
            <person name="Kaku Y."/>
            <person name="Kodaira H."/>
            <person name="Kondo H."/>
            <person name="Sugawara M."/>
            <person name="Takahashi M."/>
            <person name="Kanda K."/>
            <person name="Yokoi T."/>
            <person name="Furuya T."/>
            <person name="Kikkawa E."/>
            <person name="Omura Y."/>
            <person name="Abe K."/>
            <person name="Kamihara K."/>
            <person name="Katsuta N."/>
            <person name="Sato K."/>
            <person name="Tanikawa M."/>
            <person name="Yamazaki M."/>
            <person name="Ninomiya K."/>
            <person name="Ishibashi T."/>
            <person name="Yamashita H."/>
            <person name="Murakawa K."/>
            <person name="Fujimori K."/>
            <person name="Tanai H."/>
            <person name="Kimata M."/>
            <person name="Watanabe M."/>
            <person name="Hiraoka S."/>
            <person name="Chiba Y."/>
            <person name="Ishida S."/>
            <person name="Ono Y."/>
            <person name="Takiguchi S."/>
            <person name="Watanabe S."/>
            <person name="Yosida M."/>
            <person name="Hotuta T."/>
            <person name="Kusano J."/>
            <person name="Kanehori K."/>
            <person name="Takahashi-Fujii A."/>
            <person name="Hara H."/>
            <person name="Tanase T.-O."/>
            <person name="Nomura Y."/>
            <person name="Togiya S."/>
            <person name="Komai F."/>
            <person name="Hara R."/>
            <person name="Takeuchi K."/>
            <person name="Arita M."/>
            <person name="Imose N."/>
            <person name="Musashino K."/>
            <person name="Yuuki H."/>
            <person name="Oshima A."/>
            <person name="Sasaki N."/>
            <person name="Aotsuka S."/>
            <person name="Yoshikawa Y."/>
            <person name="Matsunawa H."/>
            <person name="Ichihara T."/>
            <person name="Shiohata N."/>
            <person name="Sano S."/>
            <person name="Moriya S."/>
            <person name="Momiyama H."/>
            <person name="Satoh N."/>
            <person name="Takami S."/>
            <person name="Terashima Y."/>
            <person name="Suzuki O."/>
            <person name="Nakagawa S."/>
            <person name="Senoh A."/>
            <person name="Mizoguchi H."/>
            <person name="Goto Y."/>
            <person name="Shimizu F."/>
            <person name="Wakebe H."/>
            <person name="Hishigaki H."/>
            <person name="Watanabe T."/>
            <person name="Sugiyama A."/>
            <person name="Takemoto M."/>
            <person name="Kawakami B."/>
            <person name="Yamazaki M."/>
            <person name="Watanabe K."/>
            <person name="Kumagai A."/>
            <person name="Itakura S."/>
            <person name="Fukuzumi Y."/>
            <person name="Fujimori Y."/>
            <person name="Komiyama M."/>
            <person name="Tashiro H."/>
            <person name="Tanigami A."/>
            <person name="Fujiwara T."/>
            <person name="Ono T."/>
            <person name="Yamada K."/>
            <person name="Fujii Y."/>
            <person name="Ozaki K."/>
            <person name="Hirao M."/>
            <person name="Ohmori Y."/>
            <person name="Kawabata A."/>
            <person name="Hikiji T."/>
            <person name="Kobatake N."/>
            <person name="Inagaki H."/>
            <person name="Ikema Y."/>
            <person name="Okamoto S."/>
            <person name="Okitani R."/>
            <person name="Kawakami T."/>
            <person name="Noguchi S."/>
            <person name="Itoh T."/>
            <person name="Shigeta K."/>
            <person name="Senba T."/>
            <person name="Matsumura K."/>
            <person name="Nakajima Y."/>
            <person name="Mizuno T."/>
            <person name="Morinaga M."/>
            <person name="Sasaki M."/>
            <person name="Togashi T."/>
            <person name="Oyama M."/>
            <person name="Hata H."/>
            <person name="Watanabe M."/>
            <person name="Komatsu T."/>
            <person name="Mizushima-Sugano J."/>
            <person name="Satoh T."/>
            <person name="Shirai Y."/>
            <person name="Takahashi Y."/>
            <person name="Nakagawa K."/>
            <person name="Okumura K."/>
            <person name="Nagase T."/>
            <person name="Nomura N."/>
            <person name="Kikuchi H."/>
            <person name="Masuho Y."/>
            <person name="Yamashita R."/>
            <person name="Nakai K."/>
            <person name="Yada T."/>
            <person name="Nakamura Y."/>
            <person name="Ohara O."/>
            <person name="Isogai T."/>
            <person name="Sugano S."/>
        </authorList>
    </citation>
    <scope>NUCLEOTIDE SEQUENCE [LARGE SCALE MRNA] (ISOFORM 1)</scope>
    <scope>VARIANT GLY-180</scope>
    <source>
        <tissue>Thymus</tissue>
        <tissue>Tongue</tissue>
    </source>
</reference>
<reference key="2">
    <citation type="journal article" date="2006" name="Nature">
        <title>Analysis of the DNA sequence and duplication history of human chromosome 15.</title>
        <authorList>
            <person name="Zody M.C."/>
            <person name="Garber M."/>
            <person name="Sharpe T."/>
            <person name="Young S.K."/>
            <person name="Rowen L."/>
            <person name="O'Neill K."/>
            <person name="Whittaker C.A."/>
            <person name="Kamal M."/>
            <person name="Chang J.L."/>
            <person name="Cuomo C.A."/>
            <person name="Dewar K."/>
            <person name="FitzGerald M.G."/>
            <person name="Kodira C.D."/>
            <person name="Madan A."/>
            <person name="Qin S."/>
            <person name="Yang X."/>
            <person name="Abbasi N."/>
            <person name="Abouelleil A."/>
            <person name="Arachchi H.M."/>
            <person name="Baradarani L."/>
            <person name="Birditt B."/>
            <person name="Bloom S."/>
            <person name="Bloom T."/>
            <person name="Borowsky M.L."/>
            <person name="Burke J."/>
            <person name="Butler J."/>
            <person name="Cook A."/>
            <person name="DeArellano K."/>
            <person name="DeCaprio D."/>
            <person name="Dorris L. III"/>
            <person name="Dors M."/>
            <person name="Eichler E.E."/>
            <person name="Engels R."/>
            <person name="Fahey J."/>
            <person name="Fleetwood P."/>
            <person name="Friedman C."/>
            <person name="Gearin G."/>
            <person name="Hall J.L."/>
            <person name="Hensley G."/>
            <person name="Johnson E."/>
            <person name="Jones C."/>
            <person name="Kamat A."/>
            <person name="Kaur A."/>
            <person name="Locke D.P."/>
            <person name="Madan A."/>
            <person name="Munson G."/>
            <person name="Jaffe D.B."/>
            <person name="Lui A."/>
            <person name="Macdonald P."/>
            <person name="Mauceli E."/>
            <person name="Naylor J.W."/>
            <person name="Nesbitt R."/>
            <person name="Nicol R."/>
            <person name="O'Leary S.B."/>
            <person name="Ratcliffe A."/>
            <person name="Rounsley S."/>
            <person name="She X."/>
            <person name="Sneddon K.M.B."/>
            <person name="Stewart S."/>
            <person name="Sougnez C."/>
            <person name="Stone S.M."/>
            <person name="Topham K."/>
            <person name="Vincent D."/>
            <person name="Wang S."/>
            <person name="Zimmer A.R."/>
            <person name="Birren B.W."/>
            <person name="Hood L."/>
            <person name="Lander E.S."/>
            <person name="Nusbaum C."/>
        </authorList>
    </citation>
    <scope>NUCLEOTIDE SEQUENCE [LARGE SCALE GENOMIC DNA]</scope>
</reference>
<reference key="3">
    <citation type="submission" date="2005-07" db="EMBL/GenBank/DDBJ databases">
        <authorList>
            <person name="Mural R.J."/>
            <person name="Istrail S."/>
            <person name="Sutton G.G."/>
            <person name="Florea L."/>
            <person name="Halpern A.L."/>
            <person name="Mobarry C.M."/>
            <person name="Lippert R."/>
            <person name="Walenz B."/>
            <person name="Shatkay H."/>
            <person name="Dew I."/>
            <person name="Miller J.R."/>
            <person name="Flanigan M.J."/>
            <person name="Edwards N.J."/>
            <person name="Bolanos R."/>
            <person name="Fasulo D."/>
            <person name="Halldorsson B.V."/>
            <person name="Hannenhalli S."/>
            <person name="Turner R."/>
            <person name="Yooseph S."/>
            <person name="Lu F."/>
            <person name="Nusskern D.R."/>
            <person name="Shue B.C."/>
            <person name="Zheng X.H."/>
            <person name="Zhong F."/>
            <person name="Delcher A.L."/>
            <person name="Huson D.H."/>
            <person name="Kravitz S.A."/>
            <person name="Mouchard L."/>
            <person name="Reinert K."/>
            <person name="Remington K.A."/>
            <person name="Clark A.G."/>
            <person name="Waterman M.S."/>
            <person name="Eichler E.E."/>
            <person name="Adams M.D."/>
            <person name="Hunkapiller M.W."/>
            <person name="Myers E.W."/>
            <person name="Venter J.C."/>
        </authorList>
    </citation>
    <scope>NUCLEOTIDE SEQUENCE [LARGE SCALE GENOMIC DNA]</scope>
</reference>
<reference key="4">
    <citation type="journal article" date="2004" name="Genome Res.">
        <title>The status, quality, and expansion of the NIH full-length cDNA project: the Mammalian Gene Collection (MGC).</title>
        <authorList>
            <consortium name="The MGC Project Team"/>
        </authorList>
    </citation>
    <scope>NUCLEOTIDE SEQUENCE [LARGE SCALE MRNA] (ISOFORMS 1 AND 2)</scope>
    <scope>VARIANTS VAL-157; VAL-161 AND GLY-180</scope>
    <source>
        <tissue>Renal cell carcinoma</tissue>
    </source>
</reference>
<protein>
    <recommendedName>
        <fullName>LysM and putative peptidoglycan-binding domain-containing protein 4</fullName>
    </recommendedName>
</protein>
<name>LYSM4_HUMAN</name>
<accession>Q5XG99</accession>
<accession>A6NII6</accession>
<accession>A8K2N1</accession>
<accession>Q96LY7</accession>
<organism>
    <name type="scientific">Homo sapiens</name>
    <name type="common">Human</name>
    <dbReference type="NCBI Taxonomy" id="9606"/>
    <lineage>
        <taxon>Eukaryota</taxon>
        <taxon>Metazoa</taxon>
        <taxon>Chordata</taxon>
        <taxon>Craniata</taxon>
        <taxon>Vertebrata</taxon>
        <taxon>Euteleostomi</taxon>
        <taxon>Mammalia</taxon>
        <taxon>Eutheria</taxon>
        <taxon>Euarchontoglires</taxon>
        <taxon>Primates</taxon>
        <taxon>Haplorrhini</taxon>
        <taxon>Catarrhini</taxon>
        <taxon>Hominidae</taxon>
        <taxon>Homo</taxon>
    </lineage>
</organism>
<comment type="subcellular location">
    <subcellularLocation>
        <location evidence="7">Membrane</location>
        <topology evidence="7">Single-pass membrane protein</topology>
    </subcellularLocation>
</comment>
<comment type="alternative products">
    <event type="alternative splicing"/>
    <isoform>
        <id>Q5XG99-1</id>
        <name>1</name>
        <sequence type="displayed"/>
    </isoform>
    <isoform>
        <id>Q5XG99-2</id>
        <name>2</name>
        <sequence type="described" ref="VSP_039883"/>
    </isoform>
</comment>
<comment type="sequence caution" evidence="7">
    <conflict type="erroneous initiation">
        <sequence resource="EMBL-CDS" id="BAB71528"/>
    </conflict>
    <text>Truncated N-terminus.</text>
</comment>
<proteinExistence type="evidence at protein level"/>
<dbReference type="EMBL" id="AK057570">
    <property type="protein sequence ID" value="BAB71528.1"/>
    <property type="status" value="ALT_INIT"/>
    <property type="molecule type" value="mRNA"/>
</dbReference>
<dbReference type="EMBL" id="AK290296">
    <property type="protein sequence ID" value="BAF82985.1"/>
    <property type="molecule type" value="mRNA"/>
</dbReference>
<dbReference type="EMBL" id="AC022692">
    <property type="status" value="NOT_ANNOTATED_CDS"/>
    <property type="molecule type" value="Genomic_DNA"/>
</dbReference>
<dbReference type="EMBL" id="CH471101">
    <property type="protein sequence ID" value="EAX02254.1"/>
    <property type="molecule type" value="Genomic_DNA"/>
</dbReference>
<dbReference type="EMBL" id="CH471101">
    <property type="protein sequence ID" value="EAX02255.1"/>
    <property type="molecule type" value="Genomic_DNA"/>
</dbReference>
<dbReference type="EMBL" id="BC084545">
    <property type="protein sequence ID" value="AAH84545.1"/>
    <property type="molecule type" value="mRNA"/>
</dbReference>
<dbReference type="EMBL" id="BC041097">
    <property type="protein sequence ID" value="AAH41097.2"/>
    <property type="molecule type" value="mRNA"/>
</dbReference>
<dbReference type="CCDS" id="CCDS10381.1">
    <molecule id="Q5XG99-2"/>
</dbReference>
<dbReference type="CCDS" id="CCDS66877.1">
    <molecule id="Q5XG99-1"/>
</dbReference>
<dbReference type="RefSeq" id="NP_001271346.1">
    <molecule id="Q5XG99-1"/>
    <property type="nucleotide sequence ID" value="NM_001284417.2"/>
</dbReference>
<dbReference type="RefSeq" id="NP_001271347.1">
    <molecule id="Q5XG99-1"/>
    <property type="nucleotide sequence ID" value="NM_001284418.2"/>
</dbReference>
<dbReference type="RefSeq" id="NP_001271351.1">
    <property type="nucleotide sequence ID" value="NM_001284422.1"/>
</dbReference>
<dbReference type="RefSeq" id="NP_689662.2">
    <molecule id="Q5XG99-2"/>
    <property type="nucleotide sequence ID" value="NM_152449.3"/>
</dbReference>
<dbReference type="RefSeq" id="XP_016877415.1">
    <property type="nucleotide sequence ID" value="XM_017021926.1"/>
</dbReference>
<dbReference type="RefSeq" id="XP_016877419.1">
    <molecule id="Q5XG99-2"/>
    <property type="nucleotide sequence ID" value="XM_017021930.3"/>
</dbReference>
<dbReference type="RefSeq" id="XP_047288119.1">
    <molecule id="Q5XG99-1"/>
    <property type="nucleotide sequence ID" value="XM_047432163.1"/>
</dbReference>
<dbReference type="RefSeq" id="XP_054233293.1">
    <molecule id="Q5XG99-2"/>
    <property type="nucleotide sequence ID" value="XM_054377318.1"/>
</dbReference>
<dbReference type="BioGRID" id="126931">
    <property type="interactions" value="9"/>
</dbReference>
<dbReference type="FunCoup" id="Q5XG99">
    <property type="interactions" value="96"/>
</dbReference>
<dbReference type="STRING" id="9606.ENSP00000342840"/>
<dbReference type="GlyCosmos" id="Q5XG99">
    <property type="glycosylation" value="1 site, No reported glycans"/>
</dbReference>
<dbReference type="GlyGen" id="Q5XG99">
    <property type="glycosylation" value="1 site"/>
</dbReference>
<dbReference type="iPTMnet" id="Q5XG99"/>
<dbReference type="PhosphoSitePlus" id="Q5XG99"/>
<dbReference type="BioMuta" id="LYSMD4"/>
<dbReference type="DMDM" id="160332305"/>
<dbReference type="jPOST" id="Q5XG99"/>
<dbReference type="MassIVE" id="Q5XG99"/>
<dbReference type="PaxDb" id="9606-ENSP00000342840"/>
<dbReference type="PeptideAtlas" id="Q5XG99"/>
<dbReference type="ProteomicsDB" id="65824">
    <molecule id="Q5XG99-1"/>
</dbReference>
<dbReference type="ProteomicsDB" id="65825">
    <molecule id="Q5XG99-2"/>
</dbReference>
<dbReference type="Antibodypedia" id="29207">
    <property type="antibodies" value="94 antibodies from 15 providers"/>
</dbReference>
<dbReference type="DNASU" id="145748"/>
<dbReference type="Ensembl" id="ENST00000344791.6">
    <molecule id="Q5XG99-2"/>
    <property type="protein sequence ID" value="ENSP00000342840.2"/>
    <property type="gene ID" value="ENSG00000183060.16"/>
</dbReference>
<dbReference type="Ensembl" id="ENST00000409796.5">
    <molecule id="Q5XG99-1"/>
    <property type="protein sequence ID" value="ENSP00000386283.1"/>
    <property type="gene ID" value="ENSG00000183060.16"/>
</dbReference>
<dbReference type="Ensembl" id="ENST00000684762.1">
    <molecule id="Q5XG99-1"/>
    <property type="protein sequence ID" value="ENSP00000506747.1"/>
    <property type="gene ID" value="ENSG00000183060.16"/>
</dbReference>
<dbReference type="GeneID" id="145748"/>
<dbReference type="KEGG" id="hsa:145748"/>
<dbReference type="MANE-Select" id="ENST00000684762.1">
    <property type="protein sequence ID" value="ENSP00000506747.1"/>
    <property type="RefSeq nucleotide sequence ID" value="NM_001284417.2"/>
    <property type="RefSeq protein sequence ID" value="NP_001271346.1"/>
</dbReference>
<dbReference type="UCSC" id="uc002bvk.5">
    <molecule id="Q5XG99-1"/>
    <property type="organism name" value="human"/>
</dbReference>
<dbReference type="AGR" id="HGNC:26571"/>
<dbReference type="CTD" id="145748"/>
<dbReference type="GeneCards" id="LYSMD4"/>
<dbReference type="HGNC" id="HGNC:26571">
    <property type="gene designation" value="LYSMD4"/>
</dbReference>
<dbReference type="HPA" id="ENSG00000183060">
    <property type="expression patterns" value="Low tissue specificity"/>
</dbReference>
<dbReference type="neXtProt" id="NX_Q5XG99"/>
<dbReference type="OpenTargets" id="ENSG00000183060"/>
<dbReference type="PharmGKB" id="PA142671496"/>
<dbReference type="VEuPathDB" id="HostDB:ENSG00000183060"/>
<dbReference type="eggNOG" id="KOG2850">
    <property type="taxonomic scope" value="Eukaryota"/>
</dbReference>
<dbReference type="GeneTree" id="ENSGT00940000160583"/>
<dbReference type="HOGENOM" id="CLU_070676_1_0_1"/>
<dbReference type="InParanoid" id="Q5XG99"/>
<dbReference type="OMA" id="ESYCVET"/>
<dbReference type="OrthoDB" id="538216at2759"/>
<dbReference type="PAN-GO" id="Q5XG99">
    <property type="GO annotations" value="0 GO annotations based on evolutionary models"/>
</dbReference>
<dbReference type="PhylomeDB" id="Q5XG99"/>
<dbReference type="TreeFam" id="TF326271"/>
<dbReference type="PathwayCommons" id="Q5XG99"/>
<dbReference type="BioGRID-ORCS" id="145748">
    <property type="hits" value="6 hits in 1155 CRISPR screens"/>
</dbReference>
<dbReference type="ChiTaRS" id="LYSMD4">
    <property type="organism name" value="human"/>
</dbReference>
<dbReference type="GenomeRNAi" id="145748"/>
<dbReference type="Pharos" id="Q5XG99">
    <property type="development level" value="Tdark"/>
</dbReference>
<dbReference type="PRO" id="PR:Q5XG99"/>
<dbReference type="Proteomes" id="UP000005640">
    <property type="component" value="Chromosome 15"/>
</dbReference>
<dbReference type="RNAct" id="Q5XG99">
    <property type="molecule type" value="protein"/>
</dbReference>
<dbReference type="Bgee" id="ENSG00000183060">
    <property type="expression patterns" value="Expressed in apex of heart and 131 other cell types or tissues"/>
</dbReference>
<dbReference type="ExpressionAtlas" id="Q5XG99">
    <property type="expression patterns" value="baseline and differential"/>
</dbReference>
<dbReference type="GO" id="GO:0016020">
    <property type="term" value="C:membrane"/>
    <property type="evidence" value="ECO:0007669"/>
    <property type="project" value="UniProtKB-SubCell"/>
</dbReference>
<dbReference type="CDD" id="cd00118">
    <property type="entry name" value="LysM"/>
    <property type="match status" value="1"/>
</dbReference>
<dbReference type="Gene3D" id="3.10.350.10">
    <property type="entry name" value="LysM domain"/>
    <property type="match status" value="1"/>
</dbReference>
<dbReference type="InterPro" id="IPR045030">
    <property type="entry name" value="LYSM1-4"/>
</dbReference>
<dbReference type="InterPro" id="IPR018392">
    <property type="entry name" value="LysM_dom"/>
</dbReference>
<dbReference type="InterPro" id="IPR036779">
    <property type="entry name" value="LysM_dom_sf"/>
</dbReference>
<dbReference type="PANTHER" id="PTHR20932:SF7">
    <property type="entry name" value="AND PUTATIVE PEPTIDOGLYCAN-BINDING DOMAIN-CONTAINING PROTEIN 4-RELATED"/>
    <property type="match status" value="1"/>
</dbReference>
<dbReference type="PANTHER" id="PTHR20932">
    <property type="entry name" value="LYSM AND PUTATIVE PEPTIDOGLYCAN-BINDING DOMAIN-CONTAINING PROTEIN"/>
    <property type="match status" value="1"/>
</dbReference>
<dbReference type="SMART" id="SM00257">
    <property type="entry name" value="LysM"/>
    <property type="match status" value="1"/>
</dbReference>
<dbReference type="PROSITE" id="PS51782">
    <property type="entry name" value="LYSM"/>
    <property type="match status" value="1"/>
</dbReference>
<feature type="chain" id="PRO_0000248013" description="LysM and putative peptidoglycan-binding domain-containing protein 4">
    <location>
        <begin position="1"/>
        <end position="296"/>
    </location>
</feature>
<feature type="topological domain" description="Extracellular" evidence="1">
    <location>
        <begin position="1"/>
        <end position="217"/>
    </location>
</feature>
<feature type="transmembrane region" description="Helical" evidence="1">
    <location>
        <begin position="218"/>
        <end position="238"/>
    </location>
</feature>
<feature type="topological domain" description="Cytoplasmic" evidence="1">
    <location>
        <begin position="239"/>
        <end position="296"/>
    </location>
</feature>
<feature type="domain" description="LysM" evidence="2">
    <location>
        <begin position="74"/>
        <end position="118"/>
    </location>
</feature>
<feature type="region of interest" description="Disordered" evidence="3">
    <location>
        <begin position="29"/>
        <end position="67"/>
    </location>
</feature>
<feature type="compositionally biased region" description="Basic residues" evidence="3">
    <location>
        <begin position="46"/>
        <end position="59"/>
    </location>
</feature>
<feature type="glycosylation site" description="N-linked (GlcNAc...) asparagine" evidence="1">
    <location>
        <position position="30"/>
    </location>
</feature>
<feature type="splice variant" id="VSP_039883" description="In isoform 2." evidence="6">
    <original>MRHEELLTKTFQGPAVVCGTPTSHVYMFKNGSGDSGDSSEEESHRVVLRPRGKERHKSGVHQPPQAGAGDVVLLQRELAQEDSLNKLALQYGC</original>
    <variation>MAVGTRGTLLKKSLTVWFCGPGARSATRAVSTSLPRREQVTWCCCSGSWPRRTASTSWRCSMAANTFYFRPNGAGDTRQNLIPDFYAFRVINNG</variation>
    <location>
        <begin position="1"/>
        <end position="93"/>
    </location>
</feature>
<feature type="sequence variant" id="VAR_027200" description="In dbSNP:rs8041089." evidence="5">
    <original>A</original>
    <variation>V</variation>
    <location>
        <position position="157"/>
    </location>
</feature>
<feature type="sequence variant" id="VAR_027201" description="In dbSNP:rs8041078." evidence="5">
    <original>A</original>
    <variation>V</variation>
    <location>
        <position position="161"/>
    </location>
</feature>
<feature type="sequence variant" id="VAR_027202" description="In dbSNP:rs2061007." evidence="4 5">
    <original>A</original>
    <variation>G</variation>
    <location>
        <position position="180"/>
    </location>
</feature>
<feature type="sequence conflict" description="In Ref. 4; AAH41097." evidence="7" ref="4">
    <original>T</original>
    <variation>S</variation>
    <location>
        <position position="195"/>
    </location>
</feature>